<comment type="function">
    <text evidence="1">Part of the ABC transporter complex GsiABCD involved in glutathione import. Probably responsible for the translocation of the substrate across the membrane.</text>
</comment>
<comment type="subunit">
    <text evidence="1">The complex is composed of two ATP-binding proteins (GsiA), two transmembrane proteins (GsiC and GsiD) and a solute-binding protein (GsiB).</text>
</comment>
<comment type="subcellular location">
    <subcellularLocation>
        <location evidence="1">Cell inner membrane</location>
        <topology evidence="2">Multi-pass membrane protein</topology>
    </subcellularLocation>
</comment>
<comment type="similarity">
    <text evidence="4">Belongs to the binding-protein-dependent transport system permease family.</text>
</comment>
<keyword id="KW-0997">Cell inner membrane</keyword>
<keyword id="KW-1003">Cell membrane</keyword>
<keyword id="KW-0472">Membrane</keyword>
<keyword id="KW-1185">Reference proteome</keyword>
<keyword id="KW-0812">Transmembrane</keyword>
<keyword id="KW-1133">Transmembrane helix</keyword>
<keyword id="KW-0813">Transport</keyword>
<feature type="chain" id="PRO_0000280013" description="Glutathione transport system permease protein GsiD">
    <location>
        <begin position="1"/>
        <end position="303"/>
    </location>
</feature>
<feature type="transmembrane region" description="Helical" evidence="3">
    <location>
        <begin position="40"/>
        <end position="60"/>
    </location>
</feature>
<feature type="transmembrane region" description="Helical" evidence="3">
    <location>
        <begin position="105"/>
        <end position="125"/>
    </location>
</feature>
<feature type="transmembrane region" description="Helical" evidence="3">
    <location>
        <begin position="144"/>
        <end position="164"/>
    </location>
</feature>
<feature type="transmembrane region" description="Helical" evidence="3">
    <location>
        <begin position="165"/>
        <end position="185"/>
    </location>
</feature>
<feature type="transmembrane region" description="Helical" evidence="3">
    <location>
        <begin position="222"/>
        <end position="242"/>
    </location>
</feature>
<feature type="transmembrane region" description="Helical" evidence="3">
    <location>
        <begin position="266"/>
        <end position="286"/>
    </location>
</feature>
<feature type="domain" description="ABC transmembrane type-1" evidence="3">
    <location>
        <begin position="101"/>
        <end position="290"/>
    </location>
</feature>
<evidence type="ECO:0000250" key="1">
    <source>
        <dbReference type="UniProtKB" id="P75799"/>
    </source>
</evidence>
<evidence type="ECO:0000255" key="2"/>
<evidence type="ECO:0000255" key="3">
    <source>
        <dbReference type="PROSITE-ProRule" id="PRU00441"/>
    </source>
</evidence>
<evidence type="ECO:0000305" key="4"/>
<gene>
    <name evidence="1" type="primary">gsiD</name>
    <name type="ordered locus">SDY_0755</name>
</gene>
<reference key="1">
    <citation type="journal article" date="2005" name="Nucleic Acids Res.">
        <title>Genome dynamics and diversity of Shigella species, the etiologic agents of bacillary dysentery.</title>
        <authorList>
            <person name="Yang F."/>
            <person name="Yang J."/>
            <person name="Zhang X."/>
            <person name="Chen L."/>
            <person name="Jiang Y."/>
            <person name="Yan Y."/>
            <person name="Tang X."/>
            <person name="Wang J."/>
            <person name="Xiong Z."/>
            <person name="Dong J."/>
            <person name="Xue Y."/>
            <person name="Zhu Y."/>
            <person name="Xu X."/>
            <person name="Sun L."/>
            <person name="Chen S."/>
            <person name="Nie H."/>
            <person name="Peng J."/>
            <person name="Xu J."/>
            <person name="Wang Y."/>
            <person name="Yuan Z."/>
            <person name="Wen Y."/>
            <person name="Yao Z."/>
            <person name="Shen Y."/>
            <person name="Qiang B."/>
            <person name="Hou Y."/>
            <person name="Yu J."/>
            <person name="Jin Q."/>
        </authorList>
    </citation>
    <scope>NUCLEOTIDE SEQUENCE [LARGE SCALE GENOMIC DNA]</scope>
    <source>
        <strain>Sd197</strain>
    </source>
</reference>
<sequence length="303" mass="33267">MRLFNWRRQAVLNAMPLVKPDQVRTPWHEFWRRFRRQHMAMTAALFVILLIVVAIFARWIAPYDAENYFDYDNLNNGPSLQHWFGVDSLGRDIFSRVLVGAQISLAAGVFAVFIGAAIGTLLGLLAGYYEGWWDRLIMRICDVLFAFPGILLAIAVVAVLGSGIANVIIAVAIFSIPAFARLVRGNTLVLKQQTFIESARSIGASDMTVLLRHILPGTVSSIVVFFTMRIGTSIISAASLSFLGLGAQPPTPEWGAMLDEARADMVIAPHVAVFPVLAIFLTVLAFNLLGDGLRDALDPKIKG</sequence>
<name>GSID_SHIDS</name>
<proteinExistence type="inferred from homology"/>
<protein>
    <recommendedName>
        <fullName evidence="1">Glutathione transport system permease protein GsiD</fullName>
    </recommendedName>
</protein>
<organism>
    <name type="scientific">Shigella dysenteriae serotype 1 (strain Sd197)</name>
    <dbReference type="NCBI Taxonomy" id="300267"/>
    <lineage>
        <taxon>Bacteria</taxon>
        <taxon>Pseudomonadati</taxon>
        <taxon>Pseudomonadota</taxon>
        <taxon>Gammaproteobacteria</taxon>
        <taxon>Enterobacterales</taxon>
        <taxon>Enterobacteriaceae</taxon>
        <taxon>Shigella</taxon>
    </lineage>
</organism>
<accession>Q32IB8</accession>
<dbReference type="EMBL" id="CP000034">
    <property type="protein sequence ID" value="ABB60939.1"/>
    <property type="molecule type" value="Genomic_DNA"/>
</dbReference>
<dbReference type="RefSeq" id="WP_001236050.1">
    <property type="nucleotide sequence ID" value="NC_007606.1"/>
</dbReference>
<dbReference type="RefSeq" id="YP_402428.1">
    <property type="nucleotide sequence ID" value="NC_007606.1"/>
</dbReference>
<dbReference type="SMR" id="Q32IB8"/>
<dbReference type="STRING" id="300267.SDY_0755"/>
<dbReference type="EnsemblBacteria" id="ABB60939">
    <property type="protein sequence ID" value="ABB60939"/>
    <property type="gene ID" value="SDY_0755"/>
</dbReference>
<dbReference type="KEGG" id="sdy:SDY_0755"/>
<dbReference type="PATRIC" id="fig|300267.13.peg.869"/>
<dbReference type="HOGENOM" id="CLU_028518_1_1_6"/>
<dbReference type="Proteomes" id="UP000002716">
    <property type="component" value="Chromosome"/>
</dbReference>
<dbReference type="GO" id="GO:0005886">
    <property type="term" value="C:plasma membrane"/>
    <property type="evidence" value="ECO:0007669"/>
    <property type="project" value="UniProtKB-SubCell"/>
</dbReference>
<dbReference type="GO" id="GO:0071916">
    <property type="term" value="F:dipeptide transmembrane transporter activity"/>
    <property type="evidence" value="ECO:0007669"/>
    <property type="project" value="TreeGrafter"/>
</dbReference>
<dbReference type="CDD" id="cd06261">
    <property type="entry name" value="TM_PBP2"/>
    <property type="match status" value="1"/>
</dbReference>
<dbReference type="FunFam" id="1.10.3720.10:FF:000022">
    <property type="entry name" value="Glutathione ABC transporter permease GsiD"/>
    <property type="match status" value="1"/>
</dbReference>
<dbReference type="Gene3D" id="1.10.3720.10">
    <property type="entry name" value="MetI-like"/>
    <property type="match status" value="1"/>
</dbReference>
<dbReference type="InterPro" id="IPR050366">
    <property type="entry name" value="BP-dependent_transpt_permease"/>
</dbReference>
<dbReference type="InterPro" id="IPR000515">
    <property type="entry name" value="MetI-like"/>
</dbReference>
<dbReference type="InterPro" id="IPR035906">
    <property type="entry name" value="MetI-like_sf"/>
</dbReference>
<dbReference type="InterPro" id="IPR025966">
    <property type="entry name" value="OppC_N"/>
</dbReference>
<dbReference type="NCBIfam" id="NF011662">
    <property type="entry name" value="PRK15082.1"/>
    <property type="match status" value="1"/>
</dbReference>
<dbReference type="PANTHER" id="PTHR43386:SF3">
    <property type="entry name" value="GLUTATHIONE TRANSPORT SYSTEM PERMEASE PROTEIN GSID"/>
    <property type="match status" value="1"/>
</dbReference>
<dbReference type="PANTHER" id="PTHR43386">
    <property type="entry name" value="OLIGOPEPTIDE TRANSPORT SYSTEM PERMEASE PROTEIN APPC"/>
    <property type="match status" value="1"/>
</dbReference>
<dbReference type="Pfam" id="PF00528">
    <property type="entry name" value="BPD_transp_1"/>
    <property type="match status" value="1"/>
</dbReference>
<dbReference type="Pfam" id="PF12911">
    <property type="entry name" value="OppC_N"/>
    <property type="match status" value="1"/>
</dbReference>
<dbReference type="SUPFAM" id="SSF161098">
    <property type="entry name" value="MetI-like"/>
    <property type="match status" value="1"/>
</dbReference>
<dbReference type="PROSITE" id="PS50928">
    <property type="entry name" value="ABC_TM1"/>
    <property type="match status" value="1"/>
</dbReference>